<reference key="1">
    <citation type="submission" date="2008-10" db="EMBL/GenBank/DDBJ databases">
        <title>Genome sequence of Bacillus cereus AH820.</title>
        <authorList>
            <person name="Dodson R.J."/>
            <person name="Durkin A.S."/>
            <person name="Rosovitz M.J."/>
            <person name="Rasko D.A."/>
            <person name="Hoffmaster A."/>
            <person name="Ravel J."/>
            <person name="Sutton G."/>
        </authorList>
    </citation>
    <scope>NUCLEOTIDE SEQUENCE [LARGE SCALE GENOMIC DNA]</scope>
    <source>
        <strain>AH820</strain>
    </source>
</reference>
<dbReference type="EC" id="7.2.2.6" evidence="1"/>
<dbReference type="EMBL" id="CP001283">
    <property type="protein sequence ID" value="ACK90447.1"/>
    <property type="molecule type" value="Genomic_DNA"/>
</dbReference>
<dbReference type="SMR" id="B7JRB8"/>
<dbReference type="KEGG" id="bcu:BCAH820_0816"/>
<dbReference type="HOGENOM" id="CLU_025728_2_0_9"/>
<dbReference type="Proteomes" id="UP000001363">
    <property type="component" value="Chromosome"/>
</dbReference>
<dbReference type="GO" id="GO:0005886">
    <property type="term" value="C:plasma membrane"/>
    <property type="evidence" value="ECO:0007669"/>
    <property type="project" value="UniProtKB-SubCell"/>
</dbReference>
<dbReference type="GO" id="GO:0005524">
    <property type="term" value="F:ATP binding"/>
    <property type="evidence" value="ECO:0007669"/>
    <property type="project" value="UniProtKB-UniRule"/>
</dbReference>
<dbReference type="GO" id="GO:0016887">
    <property type="term" value="F:ATP hydrolysis activity"/>
    <property type="evidence" value="ECO:0007669"/>
    <property type="project" value="InterPro"/>
</dbReference>
<dbReference type="GO" id="GO:0000287">
    <property type="term" value="F:magnesium ion binding"/>
    <property type="evidence" value="ECO:0007669"/>
    <property type="project" value="UniProtKB-UniRule"/>
</dbReference>
<dbReference type="GO" id="GO:0008556">
    <property type="term" value="F:P-type potassium transmembrane transporter activity"/>
    <property type="evidence" value="ECO:0007669"/>
    <property type="project" value="UniProtKB-UniRule"/>
</dbReference>
<dbReference type="CDD" id="cd02078">
    <property type="entry name" value="P-type_ATPase_K"/>
    <property type="match status" value="1"/>
</dbReference>
<dbReference type="FunFam" id="2.70.150.10:FF:000010">
    <property type="entry name" value="Potassium-transporting ATPase ATP-binding subunit"/>
    <property type="match status" value="1"/>
</dbReference>
<dbReference type="FunFam" id="3.40.1110.10:FF:000007">
    <property type="entry name" value="Potassium-transporting ATPase ATP-binding subunit"/>
    <property type="match status" value="1"/>
</dbReference>
<dbReference type="Gene3D" id="3.40.1110.10">
    <property type="entry name" value="Calcium-transporting ATPase, cytoplasmic domain N"/>
    <property type="match status" value="1"/>
</dbReference>
<dbReference type="Gene3D" id="2.70.150.10">
    <property type="entry name" value="Calcium-transporting ATPase, cytoplasmic transduction domain A"/>
    <property type="match status" value="1"/>
</dbReference>
<dbReference type="Gene3D" id="3.40.50.1000">
    <property type="entry name" value="HAD superfamily/HAD-like"/>
    <property type="match status" value="1"/>
</dbReference>
<dbReference type="HAMAP" id="MF_00285">
    <property type="entry name" value="KdpB"/>
    <property type="match status" value="1"/>
</dbReference>
<dbReference type="InterPro" id="IPR023299">
    <property type="entry name" value="ATPase_P-typ_cyto_dom_N"/>
</dbReference>
<dbReference type="InterPro" id="IPR018303">
    <property type="entry name" value="ATPase_P-typ_P_site"/>
</dbReference>
<dbReference type="InterPro" id="IPR023298">
    <property type="entry name" value="ATPase_P-typ_TM_dom_sf"/>
</dbReference>
<dbReference type="InterPro" id="IPR008250">
    <property type="entry name" value="ATPase_P-typ_transduc_dom_A_sf"/>
</dbReference>
<dbReference type="InterPro" id="IPR036412">
    <property type="entry name" value="HAD-like_sf"/>
</dbReference>
<dbReference type="InterPro" id="IPR023214">
    <property type="entry name" value="HAD_sf"/>
</dbReference>
<dbReference type="InterPro" id="IPR006391">
    <property type="entry name" value="P-type_ATPase_bsu_IA"/>
</dbReference>
<dbReference type="InterPro" id="IPR001757">
    <property type="entry name" value="P_typ_ATPase"/>
</dbReference>
<dbReference type="InterPro" id="IPR044492">
    <property type="entry name" value="P_typ_ATPase_HD_dom"/>
</dbReference>
<dbReference type="NCBIfam" id="TIGR01494">
    <property type="entry name" value="ATPase_P-type"/>
    <property type="match status" value="2"/>
</dbReference>
<dbReference type="NCBIfam" id="TIGR01497">
    <property type="entry name" value="kdpB"/>
    <property type="match status" value="1"/>
</dbReference>
<dbReference type="PANTHER" id="PTHR43743">
    <property type="entry name" value="POTASSIUM-TRANSPORTING ATPASE ATP-BINDING SUBUNIT"/>
    <property type="match status" value="1"/>
</dbReference>
<dbReference type="PANTHER" id="PTHR43743:SF1">
    <property type="entry name" value="POTASSIUM-TRANSPORTING ATPASE ATP-BINDING SUBUNIT"/>
    <property type="match status" value="1"/>
</dbReference>
<dbReference type="Pfam" id="PF00122">
    <property type="entry name" value="E1-E2_ATPase"/>
    <property type="match status" value="1"/>
</dbReference>
<dbReference type="Pfam" id="PF00702">
    <property type="entry name" value="Hydrolase"/>
    <property type="match status" value="1"/>
</dbReference>
<dbReference type="PRINTS" id="PR00119">
    <property type="entry name" value="CATATPASE"/>
</dbReference>
<dbReference type="SFLD" id="SFLDG00002">
    <property type="entry name" value="C1.7:_P-type_atpase_like"/>
    <property type="match status" value="1"/>
</dbReference>
<dbReference type="SFLD" id="SFLDF00027">
    <property type="entry name" value="p-type_atpase"/>
    <property type="match status" value="1"/>
</dbReference>
<dbReference type="SUPFAM" id="SSF81653">
    <property type="entry name" value="Calcium ATPase, transduction domain A"/>
    <property type="match status" value="1"/>
</dbReference>
<dbReference type="SUPFAM" id="SSF81665">
    <property type="entry name" value="Calcium ATPase, transmembrane domain M"/>
    <property type="match status" value="1"/>
</dbReference>
<dbReference type="SUPFAM" id="SSF56784">
    <property type="entry name" value="HAD-like"/>
    <property type="match status" value="1"/>
</dbReference>
<dbReference type="PROSITE" id="PS00154">
    <property type="entry name" value="ATPASE_E1_E2"/>
    <property type="match status" value="1"/>
</dbReference>
<evidence type="ECO:0000255" key="1">
    <source>
        <dbReference type="HAMAP-Rule" id="MF_00285"/>
    </source>
</evidence>
<sequence>MMRPVVVKEKRVNESHIHAVEDEVRQAKTMDRDIVKHAMKQSVAKLNPKVMIKNPIMFVVEIGFVITFILSFFPSHSSSIPGWFNITVSLILLFTVLFANFAEALAEGRGKAQADSLKQSKKDVFANVVKENGEIVQVSATDLRKDDVVIVKQGEMIPSDGEVIKGLASVDESAITGESAPVIKEAGGDFCSVTGGTMVVSDEITIVITSNPGESFIDKMISLVEGAARQKTPNEIALNTVLTSLTLIFLIVVVTLPIFTNYLGFQIDTAVLVALLVCLIPTTIGGLLSAIGIAGMDRVTKFNVLAMSGKAVEAAGDINTIILDKTGTITFGNRMAHTLLPVGNETIEQVGKWAAISSVLDETPEGRSVIEHVQAKSISYNKELAEQGEFIPFKAETRMSGVDLQDGTKVRKGAVGSVIEWVKSQGGTIPKDVNQKADFISKEGGTPLVVAVDNRIYGLIYLKDTVKPGMRERFEQLRQMGIKTVMCTGDNPLTAATIAKEAGVDEFVAECKPEDKIAVIKAEQDKGKLVAMTGDGTNDAPALAQADVGLAMNSGTTAAKEAANMIDLDSNPTKIIEVVGIGKQLLMTRGALTTFSIANDIAKYFAIIPAMFTLAIPQMEALNIMKLTSPLSAILSALLFNAVIIPLLIPLAMKGIAYKPMSSNALLGRNLLIYGLGGVIVPFIGIKVIDIIVGLFI</sequence>
<proteinExistence type="inferred from homology"/>
<keyword id="KW-0067">ATP-binding</keyword>
<keyword id="KW-1003">Cell membrane</keyword>
<keyword id="KW-0406">Ion transport</keyword>
<keyword id="KW-0460">Magnesium</keyword>
<keyword id="KW-0472">Membrane</keyword>
<keyword id="KW-0479">Metal-binding</keyword>
<keyword id="KW-0547">Nucleotide-binding</keyword>
<keyword id="KW-0597">Phosphoprotein</keyword>
<keyword id="KW-0630">Potassium</keyword>
<keyword id="KW-0633">Potassium transport</keyword>
<keyword id="KW-1278">Translocase</keyword>
<keyword id="KW-0812">Transmembrane</keyword>
<keyword id="KW-1133">Transmembrane helix</keyword>
<keyword id="KW-0813">Transport</keyword>
<organism>
    <name type="scientific">Bacillus cereus (strain AH820)</name>
    <dbReference type="NCBI Taxonomy" id="405535"/>
    <lineage>
        <taxon>Bacteria</taxon>
        <taxon>Bacillati</taxon>
        <taxon>Bacillota</taxon>
        <taxon>Bacilli</taxon>
        <taxon>Bacillales</taxon>
        <taxon>Bacillaceae</taxon>
        <taxon>Bacillus</taxon>
        <taxon>Bacillus cereus group</taxon>
    </lineage>
</organism>
<gene>
    <name evidence="1" type="primary">kdpB</name>
    <name type="ordered locus">BCAH820_0816</name>
</gene>
<feature type="chain" id="PRO_1000119404" description="Potassium-transporting ATPase ATP-binding subunit">
    <location>
        <begin position="1"/>
        <end position="697"/>
    </location>
</feature>
<feature type="transmembrane region" description="Helical" evidence="1">
    <location>
        <begin position="55"/>
        <end position="75"/>
    </location>
</feature>
<feature type="transmembrane region" description="Helical" evidence="1">
    <location>
        <begin position="79"/>
        <end position="99"/>
    </location>
</feature>
<feature type="transmembrane region" description="Helical" evidence="1">
    <location>
        <begin position="245"/>
        <end position="265"/>
    </location>
</feature>
<feature type="transmembrane region" description="Helical" evidence="1">
    <location>
        <begin position="271"/>
        <end position="291"/>
    </location>
</feature>
<feature type="transmembrane region" description="Helical" evidence="1">
    <location>
        <begin position="605"/>
        <end position="625"/>
    </location>
</feature>
<feature type="transmembrane region" description="Helical" evidence="1">
    <location>
        <begin position="633"/>
        <end position="653"/>
    </location>
</feature>
<feature type="transmembrane region" description="Helical" evidence="1">
    <location>
        <begin position="677"/>
        <end position="697"/>
    </location>
</feature>
<feature type="active site" description="4-aspartylphosphate intermediate" evidence="1">
    <location>
        <position position="324"/>
    </location>
</feature>
<feature type="binding site" evidence="1">
    <location>
        <position position="361"/>
    </location>
    <ligand>
        <name>ATP</name>
        <dbReference type="ChEBI" id="CHEBI:30616"/>
    </ligand>
</feature>
<feature type="binding site" evidence="1">
    <location>
        <position position="365"/>
    </location>
    <ligand>
        <name>ATP</name>
        <dbReference type="ChEBI" id="CHEBI:30616"/>
    </ligand>
</feature>
<feature type="binding site" evidence="1">
    <location>
        <begin position="393"/>
        <end position="400"/>
    </location>
    <ligand>
        <name>ATP</name>
        <dbReference type="ChEBI" id="CHEBI:30616"/>
    </ligand>
</feature>
<feature type="binding site" evidence="1">
    <location>
        <position position="412"/>
    </location>
    <ligand>
        <name>ATP</name>
        <dbReference type="ChEBI" id="CHEBI:30616"/>
    </ligand>
</feature>
<feature type="binding site" evidence="1">
    <location>
        <position position="535"/>
    </location>
    <ligand>
        <name>Mg(2+)</name>
        <dbReference type="ChEBI" id="CHEBI:18420"/>
    </ligand>
</feature>
<feature type="binding site" evidence="1">
    <location>
        <position position="539"/>
    </location>
    <ligand>
        <name>Mg(2+)</name>
        <dbReference type="ChEBI" id="CHEBI:18420"/>
    </ligand>
</feature>
<accession>B7JRB8</accession>
<protein>
    <recommendedName>
        <fullName evidence="1">Potassium-transporting ATPase ATP-binding subunit</fullName>
        <ecNumber evidence="1">7.2.2.6</ecNumber>
    </recommendedName>
    <alternativeName>
        <fullName evidence="1">ATP phosphohydrolase [potassium-transporting] B chain</fullName>
    </alternativeName>
    <alternativeName>
        <fullName evidence="1">Potassium-binding and translocating subunit B</fullName>
    </alternativeName>
    <alternativeName>
        <fullName evidence="1">Potassium-translocating ATPase B chain</fullName>
    </alternativeName>
</protein>
<comment type="function">
    <text evidence="1">Part of the high-affinity ATP-driven potassium transport (or Kdp) system, which catalyzes the hydrolysis of ATP coupled with the electrogenic transport of potassium into the cytoplasm. This subunit is responsible for energy coupling to the transport system and for the release of the potassium ions to the cytoplasm.</text>
</comment>
<comment type="catalytic activity">
    <reaction evidence="1">
        <text>K(+)(out) + ATP + H2O = K(+)(in) + ADP + phosphate + H(+)</text>
        <dbReference type="Rhea" id="RHEA:16777"/>
        <dbReference type="ChEBI" id="CHEBI:15377"/>
        <dbReference type="ChEBI" id="CHEBI:15378"/>
        <dbReference type="ChEBI" id="CHEBI:29103"/>
        <dbReference type="ChEBI" id="CHEBI:30616"/>
        <dbReference type="ChEBI" id="CHEBI:43474"/>
        <dbReference type="ChEBI" id="CHEBI:456216"/>
        <dbReference type="EC" id="7.2.2.6"/>
    </reaction>
    <physiologicalReaction direction="left-to-right" evidence="1">
        <dbReference type="Rhea" id="RHEA:16778"/>
    </physiologicalReaction>
</comment>
<comment type="subunit">
    <text evidence="1">The system is composed of three essential subunits: KdpA, KdpB and KdpC.</text>
</comment>
<comment type="subcellular location">
    <subcellularLocation>
        <location evidence="1">Cell membrane</location>
        <topology evidence="1">Multi-pass membrane protein</topology>
    </subcellularLocation>
</comment>
<comment type="similarity">
    <text evidence="1">Belongs to the cation transport ATPase (P-type) (TC 3.A.3) family. Type IA subfamily.</text>
</comment>
<name>KDPB_BACC0</name>